<reference key="1">
    <citation type="journal article" date="2009" name="J. Bacteriol.">
        <title>Role of conjugative elements in the evolution of the multidrug-resistant pandemic clone Streptococcus pneumoniae Spain23F ST81.</title>
        <authorList>
            <person name="Croucher N.J."/>
            <person name="Walker D."/>
            <person name="Romero P."/>
            <person name="Lennard N."/>
            <person name="Paterson G.K."/>
            <person name="Bason N.C."/>
            <person name="Mitchell A.M."/>
            <person name="Quail M.A."/>
            <person name="Andrew P.W."/>
            <person name="Parkhill J."/>
            <person name="Bentley S.D."/>
            <person name="Mitchell T.J."/>
        </authorList>
    </citation>
    <scope>NUCLEOTIDE SEQUENCE [LARGE SCALE GENOMIC DNA]</scope>
    <source>
        <strain>ATCC 700669 / Spain 23F-1</strain>
    </source>
</reference>
<protein>
    <recommendedName>
        <fullName evidence="1">Septation ring formation regulator EzrA</fullName>
    </recommendedName>
</protein>
<name>EZRA_STRPJ</name>
<accession>B8ZNG7</accession>
<keyword id="KW-0131">Cell cycle</keyword>
<keyword id="KW-0132">Cell division</keyword>
<keyword id="KW-1003">Cell membrane</keyword>
<keyword id="KW-0175">Coiled coil</keyword>
<keyword id="KW-0472">Membrane</keyword>
<keyword id="KW-0717">Septation</keyword>
<keyword id="KW-0812">Transmembrane</keyword>
<keyword id="KW-1133">Transmembrane helix</keyword>
<feature type="chain" id="PRO_1000148073" description="Septation ring formation regulator EzrA">
    <location>
        <begin position="1"/>
        <end position="575"/>
    </location>
</feature>
<feature type="topological domain" description="Extracellular" evidence="1">
    <location>
        <begin position="1"/>
        <end position="8"/>
    </location>
</feature>
<feature type="transmembrane region" description="Helical" evidence="1">
    <location>
        <begin position="9"/>
        <end position="27"/>
    </location>
</feature>
<feature type="topological domain" description="Cytoplasmic" evidence="1">
    <location>
        <begin position="28"/>
        <end position="575"/>
    </location>
</feature>
<feature type="coiled-coil region" evidence="1">
    <location>
        <begin position="110"/>
        <end position="191"/>
    </location>
</feature>
<feature type="coiled-coil region" evidence="1">
    <location>
        <begin position="265"/>
        <end position="301"/>
    </location>
</feature>
<feature type="coiled-coil region" evidence="1">
    <location>
        <begin position="354"/>
        <end position="416"/>
    </location>
</feature>
<feature type="coiled-coil region" evidence="1">
    <location>
        <begin position="456"/>
        <end position="526"/>
    </location>
</feature>
<dbReference type="EMBL" id="FM211187">
    <property type="protein sequence ID" value="CAR68580.1"/>
    <property type="molecule type" value="Genomic_DNA"/>
</dbReference>
<dbReference type="RefSeq" id="WP_000064817.1">
    <property type="nucleotide sequence ID" value="NC_011900.1"/>
</dbReference>
<dbReference type="SMR" id="B8ZNG7"/>
<dbReference type="KEGG" id="sne:SPN23F07360"/>
<dbReference type="HOGENOM" id="CLU_034079_2_0_9"/>
<dbReference type="GO" id="GO:0005886">
    <property type="term" value="C:plasma membrane"/>
    <property type="evidence" value="ECO:0007669"/>
    <property type="project" value="UniProtKB-SubCell"/>
</dbReference>
<dbReference type="GO" id="GO:0005940">
    <property type="term" value="C:septin ring"/>
    <property type="evidence" value="ECO:0007669"/>
    <property type="project" value="InterPro"/>
</dbReference>
<dbReference type="GO" id="GO:0000917">
    <property type="term" value="P:division septum assembly"/>
    <property type="evidence" value="ECO:0007669"/>
    <property type="project" value="UniProtKB-KW"/>
</dbReference>
<dbReference type="GO" id="GO:0000921">
    <property type="term" value="P:septin ring assembly"/>
    <property type="evidence" value="ECO:0007669"/>
    <property type="project" value="InterPro"/>
</dbReference>
<dbReference type="HAMAP" id="MF_00728">
    <property type="entry name" value="EzrA"/>
    <property type="match status" value="1"/>
</dbReference>
<dbReference type="InterPro" id="IPR010379">
    <property type="entry name" value="EzrA"/>
</dbReference>
<dbReference type="NCBIfam" id="NF003410">
    <property type="entry name" value="PRK04778.1-4"/>
    <property type="match status" value="1"/>
</dbReference>
<dbReference type="Pfam" id="PF06160">
    <property type="entry name" value="EzrA"/>
    <property type="match status" value="1"/>
</dbReference>
<proteinExistence type="inferred from homology"/>
<comment type="function">
    <text evidence="1">Negative regulator of FtsZ ring formation; modulates the frequency and position of FtsZ ring formation. Inhibits FtsZ ring formation at polar sites. Interacts either with FtsZ or with one of its binding partners to promote depolymerization.</text>
</comment>
<comment type="subcellular location">
    <subcellularLocation>
        <location evidence="1">Cell membrane</location>
        <topology evidence="1">Single-pass membrane protein</topology>
    </subcellularLocation>
    <text evidence="1">Colocalized with FtsZ to the nascent septal site.</text>
</comment>
<comment type="similarity">
    <text evidence="1">Belongs to the EzrA family.</text>
</comment>
<gene>
    <name evidence="1" type="primary">ezrA</name>
    <name type="ordered locus">SPN23F07360</name>
</gene>
<evidence type="ECO:0000255" key="1">
    <source>
        <dbReference type="HAMAP-Rule" id="MF_00728"/>
    </source>
</evidence>
<organism>
    <name type="scientific">Streptococcus pneumoniae (strain ATCC 700669 / Spain 23F-1)</name>
    <dbReference type="NCBI Taxonomy" id="561276"/>
    <lineage>
        <taxon>Bacteria</taxon>
        <taxon>Bacillati</taxon>
        <taxon>Bacillota</taxon>
        <taxon>Bacilli</taxon>
        <taxon>Lactobacillales</taxon>
        <taxon>Streptococcaceae</taxon>
        <taxon>Streptococcus</taxon>
    </lineage>
</organism>
<sequence>MSNGQLIYLMVAIAVILVLAYVVAIFLRKRNEGRLEALEERKEELYNLPVNDEVEAVKNMHLIGQSQVAFREWNQKWVDLSLNSFADIENNLFEAEGYNHSFRFLKASHQIDQIESQITLIDEDIAAIRNALADLEKQESKNSGRVLHALDLFEELQHRVAENSEQYGQALDEIEKQLENIQSEFSQFVTLNSSGDPVEAAVILDNTENHILALSHIVDRVPALVTTLSTELPDQLQDLESGYRKLIDANYHFVETDIEARFHLLYEAFKKNQENIRQLELDNAEYENGQAQEEINALYDIFTREIAAQKVVENLLATLPTYLQHMKENNTLLGEDIARLNKTYLLPETAASHVRRIQTELESFEAAIVEVTSNQEEPTQAYSVLEENLEDLQTQLKDIEDEQISVSERLTQIEKDDINARQKANVYVNRLHTIKRYMEKRNLPGIPQTFLKLFFTASNNTEDLMVELEQKMINIESVTRVLEIATNDMEALETETYNIVQYATLTEQLLQYSNRYRSFDERIQEAFNEALDIFEKEFDYHASFDKISQALEVAEPGVTNRFVTSYEKTRETIRF</sequence>